<name>MIAA_BURO0</name>
<proteinExistence type="inferred from homology"/>
<accession>B1JW31</accession>
<sequence>MSASSQSRPTTIACLLGPTASGKTAAALALAARRPIEIVSVDSALVYRDMDIGTAKPSRDERASVPHHLIDIIDPADAYSAAEFRADTLRLIGEIVARGRTPLLAGGTMLYYKALTQGLNDLPGADPEVRAALDADAARDGWPALHARLAQVDPDTAARLAPNDSQRIQRALEIFMLSGQPMSALLAAPRRTDDAAAAYRFVPVALEPSDRAVLHARIAQRFDAMLDAGFIDEVERLRRRDDLHPDLPSMRCVGYRQAWEFLDGDTDYRTMRDKGIFATRQLCKRQITWLRAMPERIVVDCIAPDSTARALDALERVLDGRTPD</sequence>
<gene>
    <name evidence="1" type="primary">miaA</name>
    <name type="ordered locus">Bcenmc03_0733</name>
</gene>
<reference key="1">
    <citation type="submission" date="2008-02" db="EMBL/GenBank/DDBJ databases">
        <title>Complete sequence of chromosome 1 of Burkholderia cenocepacia MC0-3.</title>
        <authorList>
            <person name="Copeland A."/>
            <person name="Lucas S."/>
            <person name="Lapidus A."/>
            <person name="Barry K."/>
            <person name="Bruce D."/>
            <person name="Goodwin L."/>
            <person name="Glavina del Rio T."/>
            <person name="Dalin E."/>
            <person name="Tice H."/>
            <person name="Pitluck S."/>
            <person name="Chain P."/>
            <person name="Malfatti S."/>
            <person name="Shin M."/>
            <person name="Vergez L."/>
            <person name="Schmutz J."/>
            <person name="Larimer F."/>
            <person name="Land M."/>
            <person name="Hauser L."/>
            <person name="Kyrpides N."/>
            <person name="Mikhailova N."/>
            <person name="Tiedje J."/>
            <person name="Richardson P."/>
        </authorList>
    </citation>
    <scope>NUCLEOTIDE SEQUENCE [LARGE SCALE GENOMIC DNA]</scope>
    <source>
        <strain>MC0-3</strain>
    </source>
</reference>
<protein>
    <recommendedName>
        <fullName evidence="1">tRNA dimethylallyltransferase</fullName>
        <ecNumber evidence="1">2.5.1.75</ecNumber>
    </recommendedName>
    <alternativeName>
        <fullName evidence="1">Dimethylallyl diphosphate:tRNA dimethylallyltransferase</fullName>
        <shortName evidence="1">DMAPP:tRNA dimethylallyltransferase</shortName>
        <shortName evidence="1">DMATase</shortName>
    </alternativeName>
    <alternativeName>
        <fullName evidence="1">Isopentenyl-diphosphate:tRNA isopentenyltransferase</fullName>
        <shortName evidence="1">IPP transferase</shortName>
        <shortName evidence="1">IPPT</shortName>
        <shortName evidence="1">IPTase</shortName>
    </alternativeName>
</protein>
<keyword id="KW-0067">ATP-binding</keyword>
<keyword id="KW-0460">Magnesium</keyword>
<keyword id="KW-0547">Nucleotide-binding</keyword>
<keyword id="KW-0808">Transferase</keyword>
<keyword id="KW-0819">tRNA processing</keyword>
<evidence type="ECO:0000255" key="1">
    <source>
        <dbReference type="HAMAP-Rule" id="MF_00185"/>
    </source>
</evidence>
<dbReference type="EC" id="2.5.1.75" evidence="1"/>
<dbReference type="EMBL" id="CP000958">
    <property type="protein sequence ID" value="ACA89911.1"/>
    <property type="molecule type" value="Genomic_DNA"/>
</dbReference>
<dbReference type="RefSeq" id="WP_006476825.1">
    <property type="nucleotide sequence ID" value="NC_010508.1"/>
</dbReference>
<dbReference type="SMR" id="B1JW31"/>
<dbReference type="GeneID" id="83047531"/>
<dbReference type="KEGG" id="bcm:Bcenmc03_0733"/>
<dbReference type="HOGENOM" id="CLU_032616_0_0_4"/>
<dbReference type="Proteomes" id="UP000002169">
    <property type="component" value="Chromosome 1"/>
</dbReference>
<dbReference type="GO" id="GO:0005524">
    <property type="term" value="F:ATP binding"/>
    <property type="evidence" value="ECO:0007669"/>
    <property type="project" value="UniProtKB-UniRule"/>
</dbReference>
<dbReference type="GO" id="GO:0052381">
    <property type="term" value="F:tRNA dimethylallyltransferase activity"/>
    <property type="evidence" value="ECO:0007669"/>
    <property type="project" value="UniProtKB-UniRule"/>
</dbReference>
<dbReference type="GO" id="GO:0006400">
    <property type="term" value="P:tRNA modification"/>
    <property type="evidence" value="ECO:0007669"/>
    <property type="project" value="TreeGrafter"/>
</dbReference>
<dbReference type="FunFam" id="1.10.20.140:FF:000001">
    <property type="entry name" value="tRNA dimethylallyltransferase"/>
    <property type="match status" value="1"/>
</dbReference>
<dbReference type="Gene3D" id="1.10.20.140">
    <property type="match status" value="1"/>
</dbReference>
<dbReference type="Gene3D" id="3.40.50.300">
    <property type="entry name" value="P-loop containing nucleotide triphosphate hydrolases"/>
    <property type="match status" value="1"/>
</dbReference>
<dbReference type="HAMAP" id="MF_00185">
    <property type="entry name" value="IPP_trans"/>
    <property type="match status" value="1"/>
</dbReference>
<dbReference type="InterPro" id="IPR039657">
    <property type="entry name" value="Dimethylallyltransferase"/>
</dbReference>
<dbReference type="InterPro" id="IPR018022">
    <property type="entry name" value="IPT"/>
</dbReference>
<dbReference type="InterPro" id="IPR027417">
    <property type="entry name" value="P-loop_NTPase"/>
</dbReference>
<dbReference type="NCBIfam" id="TIGR00174">
    <property type="entry name" value="miaA"/>
    <property type="match status" value="1"/>
</dbReference>
<dbReference type="PANTHER" id="PTHR11088">
    <property type="entry name" value="TRNA DIMETHYLALLYLTRANSFERASE"/>
    <property type="match status" value="1"/>
</dbReference>
<dbReference type="PANTHER" id="PTHR11088:SF60">
    <property type="entry name" value="TRNA DIMETHYLALLYLTRANSFERASE"/>
    <property type="match status" value="1"/>
</dbReference>
<dbReference type="Pfam" id="PF01715">
    <property type="entry name" value="IPPT"/>
    <property type="match status" value="1"/>
</dbReference>
<dbReference type="SUPFAM" id="SSF52540">
    <property type="entry name" value="P-loop containing nucleoside triphosphate hydrolases"/>
    <property type="match status" value="1"/>
</dbReference>
<comment type="function">
    <text evidence="1">Catalyzes the transfer of a dimethylallyl group onto the adenine at position 37 in tRNAs that read codons beginning with uridine, leading to the formation of N6-(dimethylallyl)adenosine (i(6)A).</text>
</comment>
<comment type="catalytic activity">
    <reaction evidence="1">
        <text>adenosine(37) in tRNA + dimethylallyl diphosphate = N(6)-dimethylallyladenosine(37) in tRNA + diphosphate</text>
        <dbReference type="Rhea" id="RHEA:26482"/>
        <dbReference type="Rhea" id="RHEA-COMP:10162"/>
        <dbReference type="Rhea" id="RHEA-COMP:10375"/>
        <dbReference type="ChEBI" id="CHEBI:33019"/>
        <dbReference type="ChEBI" id="CHEBI:57623"/>
        <dbReference type="ChEBI" id="CHEBI:74411"/>
        <dbReference type="ChEBI" id="CHEBI:74415"/>
        <dbReference type="EC" id="2.5.1.75"/>
    </reaction>
</comment>
<comment type="cofactor">
    <cofactor evidence="1">
        <name>Mg(2+)</name>
        <dbReference type="ChEBI" id="CHEBI:18420"/>
    </cofactor>
</comment>
<comment type="subunit">
    <text evidence="1">Monomer.</text>
</comment>
<comment type="similarity">
    <text evidence="1">Belongs to the IPP transferase family.</text>
</comment>
<organism>
    <name type="scientific">Burkholderia orbicola (strain MC0-3)</name>
    <dbReference type="NCBI Taxonomy" id="406425"/>
    <lineage>
        <taxon>Bacteria</taxon>
        <taxon>Pseudomonadati</taxon>
        <taxon>Pseudomonadota</taxon>
        <taxon>Betaproteobacteria</taxon>
        <taxon>Burkholderiales</taxon>
        <taxon>Burkholderiaceae</taxon>
        <taxon>Burkholderia</taxon>
        <taxon>Burkholderia cepacia complex</taxon>
        <taxon>Burkholderia orbicola</taxon>
    </lineage>
</organism>
<feature type="chain" id="PRO_1000098648" description="tRNA dimethylallyltransferase">
    <location>
        <begin position="1"/>
        <end position="324"/>
    </location>
</feature>
<feature type="region of interest" description="Interaction with substrate tRNA" evidence="1">
    <location>
        <begin position="42"/>
        <end position="45"/>
    </location>
</feature>
<feature type="region of interest" description="Interaction with substrate tRNA" evidence="1">
    <location>
        <begin position="166"/>
        <end position="170"/>
    </location>
</feature>
<feature type="region of interest" description="Interaction with substrate tRNA" evidence="1">
    <location>
        <begin position="251"/>
        <end position="256"/>
    </location>
</feature>
<feature type="region of interest" description="Interaction with substrate tRNA" evidence="1">
    <location>
        <begin position="284"/>
        <end position="291"/>
    </location>
</feature>
<feature type="binding site" evidence="1">
    <location>
        <begin position="17"/>
        <end position="24"/>
    </location>
    <ligand>
        <name>ATP</name>
        <dbReference type="ChEBI" id="CHEBI:30616"/>
    </ligand>
</feature>
<feature type="binding site" evidence="1">
    <location>
        <begin position="19"/>
        <end position="24"/>
    </location>
    <ligand>
        <name>substrate</name>
    </ligand>
</feature>
<feature type="site" description="Interaction with substrate tRNA" evidence="1">
    <location>
        <position position="108"/>
    </location>
</feature>
<feature type="site" description="Interaction with substrate tRNA" evidence="1">
    <location>
        <position position="130"/>
    </location>
</feature>